<keyword id="KW-0030">Aminoacyl-tRNA synthetase</keyword>
<keyword id="KW-0067">ATP-binding</keyword>
<keyword id="KW-0963">Cytoplasm</keyword>
<keyword id="KW-0436">Ligase</keyword>
<keyword id="KW-0547">Nucleotide-binding</keyword>
<keyword id="KW-0648">Protein biosynthesis</keyword>
<organism>
    <name type="scientific">Streptococcus pyogenes serotype M12 (strain MGAS9429)</name>
    <dbReference type="NCBI Taxonomy" id="370551"/>
    <lineage>
        <taxon>Bacteria</taxon>
        <taxon>Bacillati</taxon>
        <taxon>Bacillota</taxon>
        <taxon>Bacilli</taxon>
        <taxon>Lactobacillales</taxon>
        <taxon>Streptococcaceae</taxon>
        <taxon>Streptococcus</taxon>
    </lineage>
</organism>
<sequence length="305" mass="34799">MSKKLTFQEIILTLQQYWNDQGCMLMQAYDNEKGAGTMSPYTFLRAIGPEPWNAAYVEPSRRPADGRYGENPNRLYQHHQFQVVMKPSPSNIQELYLASLEKLGINPLEHDIRFVEDNWENPSTGSAGLGWEVWLDGMEITQFTYFQQVGGLATSPVTAEVTYGLERLASYIQEVDSVYDIEWAPGVKYGEIFLQPEYEHSKYSFEISDQDMLLENFEKFEKEASRALEEGLVHPAYDYVLKCSHTFNLLDARGAVSVTERAGYIARIRNLARVVAKTFVAERKKLGLPLLDEATRAILLAEDDE</sequence>
<name>SYGA_STRPC</name>
<feature type="chain" id="PRO_1000047501" description="Glycine--tRNA ligase alpha subunit">
    <location>
        <begin position="1"/>
        <end position="305"/>
    </location>
</feature>
<reference key="1">
    <citation type="journal article" date="2006" name="Proc. Natl. Acad. Sci. U.S.A.">
        <title>Molecular genetic anatomy of inter- and intraserotype variation in the human bacterial pathogen group A Streptococcus.</title>
        <authorList>
            <person name="Beres S.B."/>
            <person name="Richter E.W."/>
            <person name="Nagiec M.J."/>
            <person name="Sumby P."/>
            <person name="Porcella S.F."/>
            <person name="DeLeo F.R."/>
            <person name="Musser J.M."/>
        </authorList>
    </citation>
    <scope>NUCLEOTIDE SEQUENCE [LARGE SCALE GENOMIC DNA]</scope>
    <source>
        <strain>MGAS9429</strain>
    </source>
</reference>
<dbReference type="EC" id="6.1.1.14" evidence="1"/>
<dbReference type="EMBL" id="CP000259">
    <property type="protein sequence ID" value="ABF32570.1"/>
    <property type="molecule type" value="Genomic_DNA"/>
</dbReference>
<dbReference type="RefSeq" id="WP_002988863.1">
    <property type="nucleotide sequence ID" value="NC_008021.1"/>
</dbReference>
<dbReference type="SMR" id="Q1JKJ9"/>
<dbReference type="KEGG" id="spk:MGAS9429_Spy1383"/>
<dbReference type="HOGENOM" id="CLU_057066_1_0_9"/>
<dbReference type="Proteomes" id="UP000002433">
    <property type="component" value="Chromosome"/>
</dbReference>
<dbReference type="GO" id="GO:0005829">
    <property type="term" value="C:cytosol"/>
    <property type="evidence" value="ECO:0007669"/>
    <property type="project" value="TreeGrafter"/>
</dbReference>
<dbReference type="GO" id="GO:0005524">
    <property type="term" value="F:ATP binding"/>
    <property type="evidence" value="ECO:0007669"/>
    <property type="project" value="UniProtKB-UniRule"/>
</dbReference>
<dbReference type="GO" id="GO:0140096">
    <property type="term" value="F:catalytic activity, acting on a protein"/>
    <property type="evidence" value="ECO:0007669"/>
    <property type="project" value="UniProtKB-ARBA"/>
</dbReference>
<dbReference type="GO" id="GO:0004820">
    <property type="term" value="F:glycine-tRNA ligase activity"/>
    <property type="evidence" value="ECO:0007669"/>
    <property type="project" value="UniProtKB-UniRule"/>
</dbReference>
<dbReference type="GO" id="GO:0016740">
    <property type="term" value="F:transferase activity"/>
    <property type="evidence" value="ECO:0007669"/>
    <property type="project" value="UniProtKB-ARBA"/>
</dbReference>
<dbReference type="GO" id="GO:0006426">
    <property type="term" value="P:glycyl-tRNA aminoacylation"/>
    <property type="evidence" value="ECO:0007669"/>
    <property type="project" value="UniProtKB-UniRule"/>
</dbReference>
<dbReference type="CDD" id="cd00733">
    <property type="entry name" value="GlyRS_alpha_core"/>
    <property type="match status" value="1"/>
</dbReference>
<dbReference type="FunFam" id="3.30.930.10:FF:000006">
    <property type="entry name" value="Glycine--tRNA ligase alpha subunit"/>
    <property type="match status" value="1"/>
</dbReference>
<dbReference type="Gene3D" id="3.30.930.10">
    <property type="entry name" value="Bira Bifunctional Protein, Domain 2"/>
    <property type="match status" value="1"/>
</dbReference>
<dbReference type="Gene3D" id="1.20.58.180">
    <property type="entry name" value="Class II aaRS and biotin synthetases, domain 2"/>
    <property type="match status" value="1"/>
</dbReference>
<dbReference type="HAMAP" id="MF_00254">
    <property type="entry name" value="Gly_tRNA_synth_alpha"/>
    <property type="match status" value="1"/>
</dbReference>
<dbReference type="InterPro" id="IPR045864">
    <property type="entry name" value="aa-tRNA-synth_II/BPL/LPL"/>
</dbReference>
<dbReference type="InterPro" id="IPR006194">
    <property type="entry name" value="Gly-tRNA-synth_heterodimer"/>
</dbReference>
<dbReference type="InterPro" id="IPR002310">
    <property type="entry name" value="Gly-tRNA_ligase_asu"/>
</dbReference>
<dbReference type="NCBIfam" id="TIGR00388">
    <property type="entry name" value="glyQ"/>
    <property type="match status" value="1"/>
</dbReference>
<dbReference type="NCBIfam" id="NF006827">
    <property type="entry name" value="PRK09348.1"/>
    <property type="match status" value="1"/>
</dbReference>
<dbReference type="PANTHER" id="PTHR30075:SF2">
    <property type="entry name" value="GLYCINE--TRNA LIGASE, CHLOROPLASTIC_MITOCHONDRIAL 2"/>
    <property type="match status" value="1"/>
</dbReference>
<dbReference type="PANTHER" id="PTHR30075">
    <property type="entry name" value="GLYCYL-TRNA SYNTHETASE"/>
    <property type="match status" value="1"/>
</dbReference>
<dbReference type="Pfam" id="PF02091">
    <property type="entry name" value="tRNA-synt_2e"/>
    <property type="match status" value="1"/>
</dbReference>
<dbReference type="PRINTS" id="PR01044">
    <property type="entry name" value="TRNASYNTHGA"/>
</dbReference>
<dbReference type="SUPFAM" id="SSF55681">
    <property type="entry name" value="Class II aaRS and biotin synthetases"/>
    <property type="match status" value="1"/>
</dbReference>
<dbReference type="PROSITE" id="PS50861">
    <property type="entry name" value="AA_TRNA_LIGASE_II_GLYAB"/>
    <property type="match status" value="1"/>
</dbReference>
<protein>
    <recommendedName>
        <fullName evidence="1">Glycine--tRNA ligase alpha subunit</fullName>
        <ecNumber evidence="1">6.1.1.14</ecNumber>
    </recommendedName>
    <alternativeName>
        <fullName evidence="1">Glycyl-tRNA synthetase alpha subunit</fullName>
        <shortName evidence="1">GlyRS</shortName>
    </alternativeName>
</protein>
<gene>
    <name evidence="1" type="primary">glyQ</name>
    <name type="ordered locus">MGAS9429_Spy1383</name>
</gene>
<accession>Q1JKJ9</accession>
<comment type="catalytic activity">
    <reaction evidence="1">
        <text>tRNA(Gly) + glycine + ATP = glycyl-tRNA(Gly) + AMP + diphosphate</text>
        <dbReference type="Rhea" id="RHEA:16013"/>
        <dbReference type="Rhea" id="RHEA-COMP:9664"/>
        <dbReference type="Rhea" id="RHEA-COMP:9683"/>
        <dbReference type="ChEBI" id="CHEBI:30616"/>
        <dbReference type="ChEBI" id="CHEBI:33019"/>
        <dbReference type="ChEBI" id="CHEBI:57305"/>
        <dbReference type="ChEBI" id="CHEBI:78442"/>
        <dbReference type="ChEBI" id="CHEBI:78522"/>
        <dbReference type="ChEBI" id="CHEBI:456215"/>
        <dbReference type="EC" id="6.1.1.14"/>
    </reaction>
</comment>
<comment type="subunit">
    <text evidence="1">Tetramer of two alpha and two beta subunits.</text>
</comment>
<comment type="subcellular location">
    <subcellularLocation>
        <location evidence="1">Cytoplasm</location>
    </subcellularLocation>
</comment>
<comment type="similarity">
    <text evidence="1">Belongs to the class-II aminoacyl-tRNA synthetase family.</text>
</comment>
<evidence type="ECO:0000255" key="1">
    <source>
        <dbReference type="HAMAP-Rule" id="MF_00254"/>
    </source>
</evidence>
<proteinExistence type="inferred from homology"/>